<name>SLYX_ECO5E</name>
<reference key="1">
    <citation type="journal article" date="2011" name="Proc. Natl. Acad. Sci. U.S.A.">
        <title>Genomic anatomy of Escherichia coli O157:H7 outbreaks.</title>
        <authorList>
            <person name="Eppinger M."/>
            <person name="Mammel M.K."/>
            <person name="Leclerc J.E."/>
            <person name="Ravel J."/>
            <person name="Cebula T.A."/>
        </authorList>
    </citation>
    <scope>NUCLEOTIDE SEQUENCE [LARGE SCALE GENOMIC DNA]</scope>
    <source>
        <strain>EC4115 / EHEC</strain>
    </source>
</reference>
<evidence type="ECO:0000255" key="1">
    <source>
        <dbReference type="HAMAP-Rule" id="MF_00715"/>
    </source>
</evidence>
<evidence type="ECO:0000256" key="2">
    <source>
        <dbReference type="SAM" id="MobiDB-lite"/>
    </source>
</evidence>
<proteinExistence type="inferred from homology"/>
<comment type="similarity">
    <text evidence="1">Belongs to the SlyX family.</text>
</comment>
<accession>B5YTQ5</accession>
<dbReference type="EMBL" id="CP001164">
    <property type="protein sequence ID" value="ACI37155.1"/>
    <property type="molecule type" value="Genomic_DNA"/>
</dbReference>
<dbReference type="RefSeq" id="WP_001153615.1">
    <property type="nucleotide sequence ID" value="NC_011353.1"/>
</dbReference>
<dbReference type="SMR" id="B5YTQ5"/>
<dbReference type="KEGG" id="ecf:ECH74115_4657"/>
<dbReference type="HOGENOM" id="CLU_180796_4_2_6"/>
<dbReference type="Gene3D" id="1.20.5.300">
    <property type="match status" value="1"/>
</dbReference>
<dbReference type="HAMAP" id="MF_00715">
    <property type="entry name" value="SlyX"/>
    <property type="match status" value="1"/>
</dbReference>
<dbReference type="InterPro" id="IPR007236">
    <property type="entry name" value="SlyX"/>
</dbReference>
<dbReference type="NCBIfam" id="NF002750">
    <property type="entry name" value="PRK02793.1"/>
    <property type="match status" value="1"/>
</dbReference>
<dbReference type="PANTHER" id="PTHR36508">
    <property type="entry name" value="PROTEIN SLYX"/>
    <property type="match status" value="1"/>
</dbReference>
<dbReference type="PANTHER" id="PTHR36508:SF1">
    <property type="entry name" value="PROTEIN SLYX"/>
    <property type="match status" value="1"/>
</dbReference>
<dbReference type="Pfam" id="PF04102">
    <property type="entry name" value="SlyX"/>
    <property type="match status" value="1"/>
</dbReference>
<protein>
    <recommendedName>
        <fullName evidence="1">Protein SlyX</fullName>
    </recommendedName>
</protein>
<organism>
    <name type="scientific">Escherichia coli O157:H7 (strain EC4115 / EHEC)</name>
    <dbReference type="NCBI Taxonomy" id="444450"/>
    <lineage>
        <taxon>Bacteria</taxon>
        <taxon>Pseudomonadati</taxon>
        <taxon>Pseudomonadota</taxon>
        <taxon>Gammaproteobacteria</taxon>
        <taxon>Enterobacterales</taxon>
        <taxon>Enterobacteriaceae</taxon>
        <taxon>Escherichia</taxon>
    </lineage>
</organism>
<feature type="chain" id="PRO_1000195835" description="Protein SlyX">
    <location>
        <begin position="1"/>
        <end position="72"/>
    </location>
</feature>
<feature type="region of interest" description="Disordered" evidence="2">
    <location>
        <begin position="52"/>
        <end position="72"/>
    </location>
</feature>
<feature type="compositionally biased region" description="Polar residues" evidence="2">
    <location>
        <begin position="55"/>
        <end position="65"/>
    </location>
</feature>
<sequence length="72" mass="8214">MQDLSLEARLAELESRLAFQEITIEELNVTVTAHEMEMAKLRDHLRLLTEKLKASQPSNIASQAEETPPPHY</sequence>
<gene>
    <name evidence="1" type="primary">slyX</name>
    <name type="ordered locus">ECH74115_4657</name>
</gene>